<gene>
    <name evidence="1" type="primary">rpmB</name>
    <name type="ordered locus">ASA_4228</name>
</gene>
<dbReference type="EMBL" id="CP000644">
    <property type="protein sequence ID" value="ABO92156.1"/>
    <property type="molecule type" value="Genomic_DNA"/>
</dbReference>
<dbReference type="RefSeq" id="WP_005321271.1">
    <property type="nucleotide sequence ID" value="NC_009348.1"/>
</dbReference>
<dbReference type="SMR" id="A4STD4"/>
<dbReference type="STRING" id="29491.GCA_000820065_04487"/>
<dbReference type="GeneID" id="92721354"/>
<dbReference type="KEGG" id="asa:ASA_4228"/>
<dbReference type="eggNOG" id="COG0227">
    <property type="taxonomic scope" value="Bacteria"/>
</dbReference>
<dbReference type="HOGENOM" id="CLU_064548_3_1_6"/>
<dbReference type="Proteomes" id="UP000000225">
    <property type="component" value="Chromosome"/>
</dbReference>
<dbReference type="GO" id="GO:0022625">
    <property type="term" value="C:cytosolic large ribosomal subunit"/>
    <property type="evidence" value="ECO:0007669"/>
    <property type="project" value="TreeGrafter"/>
</dbReference>
<dbReference type="GO" id="GO:0003735">
    <property type="term" value="F:structural constituent of ribosome"/>
    <property type="evidence" value="ECO:0007669"/>
    <property type="project" value="InterPro"/>
</dbReference>
<dbReference type="GO" id="GO:0006412">
    <property type="term" value="P:translation"/>
    <property type="evidence" value="ECO:0007669"/>
    <property type="project" value="UniProtKB-UniRule"/>
</dbReference>
<dbReference type="FunFam" id="2.30.170.40:FF:000001">
    <property type="entry name" value="50S ribosomal protein L28"/>
    <property type="match status" value="1"/>
</dbReference>
<dbReference type="Gene3D" id="2.30.170.40">
    <property type="entry name" value="Ribosomal protein L28/L24"/>
    <property type="match status" value="1"/>
</dbReference>
<dbReference type="HAMAP" id="MF_00373">
    <property type="entry name" value="Ribosomal_bL28"/>
    <property type="match status" value="1"/>
</dbReference>
<dbReference type="InterPro" id="IPR026569">
    <property type="entry name" value="Ribosomal_bL28"/>
</dbReference>
<dbReference type="InterPro" id="IPR034704">
    <property type="entry name" value="Ribosomal_bL28/bL31-like_sf"/>
</dbReference>
<dbReference type="InterPro" id="IPR001383">
    <property type="entry name" value="Ribosomal_bL28_bact-type"/>
</dbReference>
<dbReference type="InterPro" id="IPR037147">
    <property type="entry name" value="Ribosomal_bL28_sf"/>
</dbReference>
<dbReference type="NCBIfam" id="TIGR00009">
    <property type="entry name" value="L28"/>
    <property type="match status" value="1"/>
</dbReference>
<dbReference type="PANTHER" id="PTHR13528">
    <property type="entry name" value="39S RIBOSOMAL PROTEIN L28, MITOCHONDRIAL"/>
    <property type="match status" value="1"/>
</dbReference>
<dbReference type="PANTHER" id="PTHR13528:SF2">
    <property type="entry name" value="LARGE RIBOSOMAL SUBUNIT PROTEIN BL28M"/>
    <property type="match status" value="1"/>
</dbReference>
<dbReference type="Pfam" id="PF00830">
    <property type="entry name" value="Ribosomal_L28"/>
    <property type="match status" value="1"/>
</dbReference>
<dbReference type="SUPFAM" id="SSF143800">
    <property type="entry name" value="L28p-like"/>
    <property type="match status" value="1"/>
</dbReference>
<proteinExistence type="inferred from homology"/>
<comment type="similarity">
    <text evidence="1">Belongs to the bacterial ribosomal protein bL28 family.</text>
</comment>
<accession>A4STD4</accession>
<protein>
    <recommendedName>
        <fullName evidence="1">Large ribosomal subunit protein bL28</fullName>
    </recommendedName>
    <alternativeName>
        <fullName evidence="3">50S ribosomal protein L28</fullName>
    </alternativeName>
</protein>
<sequence>MSRVCQVTGKRPAVGNNRSHANNATKRRFLPNLHTHRFWVEGEKRFVSLRVSAKGMRIIDKRGVEVVLAELRASGVKV</sequence>
<feature type="chain" id="PRO_1000007160" description="Large ribosomal subunit protein bL28">
    <location>
        <begin position="1"/>
        <end position="78"/>
    </location>
</feature>
<feature type="region of interest" description="Disordered" evidence="2">
    <location>
        <begin position="1"/>
        <end position="24"/>
    </location>
</feature>
<evidence type="ECO:0000255" key="1">
    <source>
        <dbReference type="HAMAP-Rule" id="MF_00373"/>
    </source>
</evidence>
<evidence type="ECO:0000256" key="2">
    <source>
        <dbReference type="SAM" id="MobiDB-lite"/>
    </source>
</evidence>
<evidence type="ECO:0000305" key="3"/>
<reference key="1">
    <citation type="journal article" date="2008" name="BMC Genomics">
        <title>The genome of Aeromonas salmonicida subsp. salmonicida A449: insights into the evolution of a fish pathogen.</title>
        <authorList>
            <person name="Reith M.E."/>
            <person name="Singh R.K."/>
            <person name="Curtis B."/>
            <person name="Boyd J.M."/>
            <person name="Bouevitch A."/>
            <person name="Kimball J."/>
            <person name="Munholland J."/>
            <person name="Murphy C."/>
            <person name="Sarty D."/>
            <person name="Williams J."/>
            <person name="Nash J.H."/>
            <person name="Johnson S.C."/>
            <person name="Brown L.L."/>
        </authorList>
    </citation>
    <scope>NUCLEOTIDE SEQUENCE [LARGE SCALE GENOMIC DNA]</scope>
    <source>
        <strain>A449</strain>
    </source>
</reference>
<name>RL28_AERS4</name>
<organism>
    <name type="scientific">Aeromonas salmonicida (strain A449)</name>
    <dbReference type="NCBI Taxonomy" id="382245"/>
    <lineage>
        <taxon>Bacteria</taxon>
        <taxon>Pseudomonadati</taxon>
        <taxon>Pseudomonadota</taxon>
        <taxon>Gammaproteobacteria</taxon>
        <taxon>Aeromonadales</taxon>
        <taxon>Aeromonadaceae</taxon>
        <taxon>Aeromonas</taxon>
    </lineage>
</organism>
<keyword id="KW-0687">Ribonucleoprotein</keyword>
<keyword id="KW-0689">Ribosomal protein</keyword>